<keyword id="KW-0456">Lyase</keyword>
<gene>
    <name evidence="1" type="primary">mgsA</name>
    <name type="ordered locus">Bcen_1679</name>
</gene>
<reference key="1">
    <citation type="submission" date="2006-05" db="EMBL/GenBank/DDBJ databases">
        <title>Complete sequence of chromosome 1 of Burkholderia cenocepacia AU 1054.</title>
        <authorList>
            <consortium name="US DOE Joint Genome Institute"/>
            <person name="Copeland A."/>
            <person name="Lucas S."/>
            <person name="Lapidus A."/>
            <person name="Barry K."/>
            <person name="Detter J.C."/>
            <person name="Glavina del Rio T."/>
            <person name="Hammon N."/>
            <person name="Israni S."/>
            <person name="Dalin E."/>
            <person name="Tice H."/>
            <person name="Pitluck S."/>
            <person name="Chain P."/>
            <person name="Malfatti S."/>
            <person name="Shin M."/>
            <person name="Vergez L."/>
            <person name="Schmutz J."/>
            <person name="Larimer F."/>
            <person name="Land M."/>
            <person name="Hauser L."/>
            <person name="Kyrpides N."/>
            <person name="Lykidis A."/>
            <person name="LiPuma J.J."/>
            <person name="Konstantinidis K."/>
            <person name="Tiedje J.M."/>
            <person name="Richardson P."/>
        </authorList>
    </citation>
    <scope>NUCLEOTIDE SEQUENCE [LARGE SCALE GENOMIC DNA]</scope>
    <source>
        <strain>AU 1054</strain>
    </source>
</reference>
<feature type="chain" id="PRO_1000017789" description="Methylglyoxal synthase">
    <location>
        <begin position="1"/>
        <end position="130"/>
    </location>
</feature>
<feature type="domain" description="MGS-like" evidence="1">
    <location>
        <begin position="1"/>
        <end position="130"/>
    </location>
</feature>
<feature type="active site" description="Proton donor/acceptor" evidence="1">
    <location>
        <position position="63"/>
    </location>
</feature>
<feature type="binding site" evidence="1">
    <location>
        <position position="11"/>
    </location>
    <ligand>
        <name>substrate</name>
    </ligand>
</feature>
<feature type="binding site" evidence="1">
    <location>
        <position position="15"/>
    </location>
    <ligand>
        <name>substrate</name>
    </ligand>
</feature>
<feature type="binding site" evidence="1">
    <location>
        <begin position="37"/>
        <end position="40"/>
    </location>
    <ligand>
        <name>substrate</name>
    </ligand>
</feature>
<feature type="binding site" evidence="1">
    <location>
        <begin position="57"/>
        <end position="58"/>
    </location>
    <ligand>
        <name>substrate</name>
    </ligand>
</feature>
<feature type="binding site" evidence="1">
    <location>
        <position position="90"/>
    </location>
    <ligand>
        <name>substrate</name>
    </ligand>
</feature>
<proteinExistence type="inferred from homology"/>
<comment type="function">
    <text evidence="1">Catalyzes the formation of methylglyoxal from dihydroxyacetone phosphate.</text>
</comment>
<comment type="catalytic activity">
    <reaction evidence="1">
        <text>dihydroxyacetone phosphate = methylglyoxal + phosphate</text>
        <dbReference type="Rhea" id="RHEA:17937"/>
        <dbReference type="ChEBI" id="CHEBI:17158"/>
        <dbReference type="ChEBI" id="CHEBI:43474"/>
        <dbReference type="ChEBI" id="CHEBI:57642"/>
        <dbReference type="EC" id="4.2.3.3"/>
    </reaction>
</comment>
<comment type="similarity">
    <text evidence="1">Belongs to the methylglyoxal synthase family.</text>
</comment>
<name>MGSA_BURO1</name>
<accession>Q1BUX2</accession>
<protein>
    <recommendedName>
        <fullName evidence="1">Methylglyoxal synthase</fullName>
        <shortName evidence="1">MGS</shortName>
        <ecNumber evidence="1">4.2.3.3</ecNumber>
    </recommendedName>
</protein>
<sequence length="130" mass="13883">MSKPRIALIAHDAKKDEIVALAGQYRETLAQCRLVATGTTGGRIAAAHGLEVERKLSGPLGGDLQIGAEFADGRVDIVVFLRDPMTAQPHDPDITALVRACDVHDVPVATNVATARMLLDDLARNMQDVC</sequence>
<evidence type="ECO:0000255" key="1">
    <source>
        <dbReference type="HAMAP-Rule" id="MF_00549"/>
    </source>
</evidence>
<organism>
    <name type="scientific">Burkholderia orbicola (strain AU 1054)</name>
    <dbReference type="NCBI Taxonomy" id="331271"/>
    <lineage>
        <taxon>Bacteria</taxon>
        <taxon>Pseudomonadati</taxon>
        <taxon>Pseudomonadota</taxon>
        <taxon>Betaproteobacteria</taxon>
        <taxon>Burkholderiales</taxon>
        <taxon>Burkholderiaceae</taxon>
        <taxon>Burkholderia</taxon>
        <taxon>Burkholderia cepacia complex</taxon>
        <taxon>Burkholderia orbicola</taxon>
    </lineage>
</organism>
<dbReference type="EC" id="4.2.3.3" evidence="1"/>
<dbReference type="EMBL" id="CP000378">
    <property type="protein sequence ID" value="ABF76583.1"/>
    <property type="molecule type" value="Genomic_DNA"/>
</dbReference>
<dbReference type="SMR" id="Q1BUX2"/>
<dbReference type="HOGENOM" id="CLU_120420_1_0_4"/>
<dbReference type="GO" id="GO:0005829">
    <property type="term" value="C:cytosol"/>
    <property type="evidence" value="ECO:0007669"/>
    <property type="project" value="TreeGrafter"/>
</dbReference>
<dbReference type="GO" id="GO:0008929">
    <property type="term" value="F:methylglyoxal synthase activity"/>
    <property type="evidence" value="ECO:0007669"/>
    <property type="project" value="UniProtKB-UniRule"/>
</dbReference>
<dbReference type="GO" id="GO:0019242">
    <property type="term" value="P:methylglyoxal biosynthetic process"/>
    <property type="evidence" value="ECO:0007669"/>
    <property type="project" value="UniProtKB-UniRule"/>
</dbReference>
<dbReference type="CDD" id="cd01422">
    <property type="entry name" value="MGS"/>
    <property type="match status" value="1"/>
</dbReference>
<dbReference type="Gene3D" id="3.40.50.1380">
    <property type="entry name" value="Methylglyoxal synthase-like domain"/>
    <property type="match status" value="1"/>
</dbReference>
<dbReference type="HAMAP" id="MF_00549">
    <property type="entry name" value="Methylglyoxal_synth"/>
    <property type="match status" value="1"/>
</dbReference>
<dbReference type="InterPro" id="IPR004363">
    <property type="entry name" value="Methylgl_synth"/>
</dbReference>
<dbReference type="InterPro" id="IPR018148">
    <property type="entry name" value="Methylglyoxal_synth_AS"/>
</dbReference>
<dbReference type="InterPro" id="IPR011607">
    <property type="entry name" value="MGS-like_dom"/>
</dbReference>
<dbReference type="InterPro" id="IPR036914">
    <property type="entry name" value="MGS-like_dom_sf"/>
</dbReference>
<dbReference type="NCBIfam" id="TIGR00160">
    <property type="entry name" value="MGSA"/>
    <property type="match status" value="1"/>
</dbReference>
<dbReference type="NCBIfam" id="NF003559">
    <property type="entry name" value="PRK05234.1"/>
    <property type="match status" value="1"/>
</dbReference>
<dbReference type="PANTHER" id="PTHR30492">
    <property type="entry name" value="METHYLGLYOXAL SYNTHASE"/>
    <property type="match status" value="1"/>
</dbReference>
<dbReference type="PANTHER" id="PTHR30492:SF0">
    <property type="entry name" value="METHYLGLYOXAL SYNTHASE"/>
    <property type="match status" value="1"/>
</dbReference>
<dbReference type="Pfam" id="PF02142">
    <property type="entry name" value="MGS"/>
    <property type="match status" value="1"/>
</dbReference>
<dbReference type="PIRSF" id="PIRSF006614">
    <property type="entry name" value="Methylglyox_syn"/>
    <property type="match status" value="1"/>
</dbReference>
<dbReference type="SMART" id="SM00851">
    <property type="entry name" value="MGS"/>
    <property type="match status" value="1"/>
</dbReference>
<dbReference type="SUPFAM" id="SSF52335">
    <property type="entry name" value="Methylglyoxal synthase-like"/>
    <property type="match status" value="1"/>
</dbReference>
<dbReference type="PROSITE" id="PS01335">
    <property type="entry name" value="METHYLGLYOXAL_SYNTH"/>
    <property type="match status" value="1"/>
</dbReference>
<dbReference type="PROSITE" id="PS51855">
    <property type="entry name" value="MGS"/>
    <property type="match status" value="1"/>
</dbReference>